<accession>Q8CRN9</accession>
<protein>
    <recommendedName>
        <fullName evidence="1">Hydroxyethylthiazole kinase</fullName>
        <ecNumber evidence="1">2.7.1.50</ecNumber>
    </recommendedName>
    <alternativeName>
        <fullName evidence="1">4-methyl-5-beta-hydroxyethylthiazole kinase</fullName>
        <shortName evidence="1">TH kinase</shortName>
        <shortName evidence="1">Thz kinase</shortName>
    </alternativeName>
</protein>
<keyword id="KW-0067">ATP-binding</keyword>
<keyword id="KW-0418">Kinase</keyword>
<keyword id="KW-0460">Magnesium</keyword>
<keyword id="KW-0479">Metal-binding</keyword>
<keyword id="KW-0547">Nucleotide-binding</keyword>
<keyword id="KW-0784">Thiamine biosynthesis</keyword>
<keyword id="KW-0808">Transferase</keyword>
<comment type="function">
    <text evidence="1">Catalyzes the phosphorylation of the hydroxyl group of 4-methyl-5-beta-hydroxyethylthiazole (THZ).</text>
</comment>
<comment type="catalytic activity">
    <reaction evidence="1">
        <text>5-(2-hydroxyethyl)-4-methylthiazole + ATP = 4-methyl-5-(2-phosphooxyethyl)-thiazole + ADP + H(+)</text>
        <dbReference type="Rhea" id="RHEA:24212"/>
        <dbReference type="ChEBI" id="CHEBI:15378"/>
        <dbReference type="ChEBI" id="CHEBI:17957"/>
        <dbReference type="ChEBI" id="CHEBI:30616"/>
        <dbReference type="ChEBI" id="CHEBI:58296"/>
        <dbReference type="ChEBI" id="CHEBI:456216"/>
        <dbReference type="EC" id="2.7.1.50"/>
    </reaction>
</comment>
<comment type="cofactor">
    <cofactor evidence="1">
        <name>Mg(2+)</name>
        <dbReference type="ChEBI" id="CHEBI:18420"/>
    </cofactor>
</comment>
<comment type="pathway">
    <text evidence="1">Cofactor biosynthesis; thiamine diphosphate biosynthesis; 4-methyl-5-(2-phosphoethyl)-thiazole from 5-(2-hydroxyethyl)-4-methylthiazole: step 1/1.</text>
</comment>
<comment type="similarity">
    <text evidence="1">Belongs to the Thz kinase family.</text>
</comment>
<dbReference type="EC" id="2.7.1.50" evidence="1"/>
<dbReference type="EMBL" id="AE015929">
    <property type="protein sequence ID" value="AAO05290.1"/>
    <property type="molecule type" value="Genomic_DNA"/>
</dbReference>
<dbReference type="RefSeq" id="NP_765246.1">
    <property type="nucleotide sequence ID" value="NC_004461.1"/>
</dbReference>
<dbReference type="RefSeq" id="WP_002469583.1">
    <property type="nucleotide sequence ID" value="NZ_WBME01000021.1"/>
</dbReference>
<dbReference type="SMR" id="Q8CRN9"/>
<dbReference type="GeneID" id="50018209"/>
<dbReference type="KEGG" id="sep:SE_1691"/>
<dbReference type="PATRIC" id="fig|176280.10.peg.1651"/>
<dbReference type="eggNOG" id="COG2145">
    <property type="taxonomic scope" value="Bacteria"/>
</dbReference>
<dbReference type="HOGENOM" id="CLU_019943_0_2_9"/>
<dbReference type="OrthoDB" id="9778146at2"/>
<dbReference type="UniPathway" id="UPA00060">
    <property type="reaction ID" value="UER00139"/>
</dbReference>
<dbReference type="Proteomes" id="UP000001411">
    <property type="component" value="Chromosome"/>
</dbReference>
<dbReference type="GO" id="GO:0005524">
    <property type="term" value="F:ATP binding"/>
    <property type="evidence" value="ECO:0007669"/>
    <property type="project" value="UniProtKB-UniRule"/>
</dbReference>
<dbReference type="GO" id="GO:0004417">
    <property type="term" value="F:hydroxyethylthiazole kinase activity"/>
    <property type="evidence" value="ECO:0007669"/>
    <property type="project" value="UniProtKB-UniRule"/>
</dbReference>
<dbReference type="GO" id="GO:0000287">
    <property type="term" value="F:magnesium ion binding"/>
    <property type="evidence" value="ECO:0007669"/>
    <property type="project" value="UniProtKB-UniRule"/>
</dbReference>
<dbReference type="GO" id="GO:0009228">
    <property type="term" value="P:thiamine biosynthetic process"/>
    <property type="evidence" value="ECO:0007669"/>
    <property type="project" value="UniProtKB-KW"/>
</dbReference>
<dbReference type="GO" id="GO:0009229">
    <property type="term" value="P:thiamine diphosphate biosynthetic process"/>
    <property type="evidence" value="ECO:0007669"/>
    <property type="project" value="UniProtKB-UniRule"/>
</dbReference>
<dbReference type="CDD" id="cd01170">
    <property type="entry name" value="THZ_kinase"/>
    <property type="match status" value="1"/>
</dbReference>
<dbReference type="Gene3D" id="3.40.1190.20">
    <property type="match status" value="1"/>
</dbReference>
<dbReference type="HAMAP" id="MF_00228">
    <property type="entry name" value="Thz_kinase"/>
    <property type="match status" value="1"/>
</dbReference>
<dbReference type="InterPro" id="IPR000417">
    <property type="entry name" value="Hyethyz_kinase"/>
</dbReference>
<dbReference type="InterPro" id="IPR029056">
    <property type="entry name" value="Ribokinase-like"/>
</dbReference>
<dbReference type="NCBIfam" id="NF006830">
    <property type="entry name" value="PRK09355.1"/>
    <property type="match status" value="1"/>
</dbReference>
<dbReference type="NCBIfam" id="TIGR00694">
    <property type="entry name" value="thiM"/>
    <property type="match status" value="1"/>
</dbReference>
<dbReference type="Pfam" id="PF02110">
    <property type="entry name" value="HK"/>
    <property type="match status" value="1"/>
</dbReference>
<dbReference type="PIRSF" id="PIRSF000513">
    <property type="entry name" value="Thz_kinase"/>
    <property type="match status" value="1"/>
</dbReference>
<dbReference type="PRINTS" id="PR01099">
    <property type="entry name" value="HYETHTZKNASE"/>
</dbReference>
<dbReference type="SUPFAM" id="SSF53613">
    <property type="entry name" value="Ribokinase-like"/>
    <property type="match status" value="1"/>
</dbReference>
<name>THIM_STAES</name>
<proteinExistence type="inferred from homology"/>
<reference key="1">
    <citation type="journal article" date="2003" name="Mol. Microbiol.">
        <title>Genome-based analysis of virulence genes in a non-biofilm-forming Staphylococcus epidermidis strain (ATCC 12228).</title>
        <authorList>
            <person name="Zhang Y.-Q."/>
            <person name="Ren S.-X."/>
            <person name="Li H.-L."/>
            <person name="Wang Y.-X."/>
            <person name="Fu G."/>
            <person name="Yang J."/>
            <person name="Qin Z.-Q."/>
            <person name="Miao Y.-G."/>
            <person name="Wang W.-Y."/>
            <person name="Chen R.-S."/>
            <person name="Shen Y."/>
            <person name="Chen Z."/>
            <person name="Yuan Z.-H."/>
            <person name="Zhao G.-P."/>
            <person name="Qu D."/>
            <person name="Danchin A."/>
            <person name="Wen Y.-M."/>
        </authorList>
    </citation>
    <scope>NUCLEOTIDE SEQUENCE [LARGE SCALE GENOMIC DNA]</scope>
    <source>
        <strain>ATCC 12228 / FDA PCI 1200</strain>
    </source>
</reference>
<gene>
    <name evidence="1" type="primary">thiM</name>
    <name type="ordered locus">SE_1691</name>
</gene>
<sequence length="262" mass="28388">MNNLERLRSENPLVICYTNDVVKNFTANGLLSLGASPAMSEAPEEAEDFTRMASALLINIGTLTRENEEDIIKIGKIANQQGTPIVFDPVAVGASTYRKNFCQRFLGEVNVTVIKGNASEILTLIDFNTTMKGTDSDSELDSVNIAKKAANTLNTAIVITGKDDIIAKNEKIIKLSNGSPLLTKITGAGCLLGGVLASFLFRNTQPSIDLLVEAVSVYNIAAEFAEQAPHVNGPSTFLSELLDQLYQMNDITYKNQVKKVEI</sequence>
<feature type="chain" id="PRO_0000156958" description="Hydroxyethylthiazole kinase">
    <location>
        <begin position="1"/>
        <end position="262"/>
    </location>
</feature>
<feature type="binding site" evidence="1">
    <location>
        <position position="39"/>
    </location>
    <ligand>
        <name>substrate</name>
    </ligand>
</feature>
<feature type="binding site" evidence="1">
    <location>
        <position position="115"/>
    </location>
    <ligand>
        <name>ATP</name>
        <dbReference type="ChEBI" id="CHEBI:30616"/>
    </ligand>
</feature>
<feature type="binding site" evidence="1">
    <location>
        <position position="160"/>
    </location>
    <ligand>
        <name>ATP</name>
        <dbReference type="ChEBI" id="CHEBI:30616"/>
    </ligand>
</feature>
<feature type="binding site" evidence="1">
    <location>
        <position position="187"/>
    </location>
    <ligand>
        <name>substrate</name>
    </ligand>
</feature>
<organism>
    <name type="scientific">Staphylococcus epidermidis (strain ATCC 12228 / FDA PCI 1200)</name>
    <dbReference type="NCBI Taxonomy" id="176280"/>
    <lineage>
        <taxon>Bacteria</taxon>
        <taxon>Bacillati</taxon>
        <taxon>Bacillota</taxon>
        <taxon>Bacilli</taxon>
        <taxon>Bacillales</taxon>
        <taxon>Staphylococcaceae</taxon>
        <taxon>Staphylococcus</taxon>
    </lineage>
</organism>
<evidence type="ECO:0000255" key="1">
    <source>
        <dbReference type="HAMAP-Rule" id="MF_00228"/>
    </source>
</evidence>